<accession>A5GJ28</accession>
<name>PSBT_SYNPW</name>
<protein>
    <recommendedName>
        <fullName evidence="1">Photosystem II reaction center protein T</fullName>
        <shortName evidence="1">PSII-T</shortName>
    </recommendedName>
</protein>
<evidence type="ECO:0000255" key="1">
    <source>
        <dbReference type="HAMAP-Rule" id="MF_00808"/>
    </source>
</evidence>
<comment type="function">
    <text evidence="1">Found at the monomer-monomer interface of the photosystem II (PS II) dimer, plays a role in assembly and dimerization of PSII. PSII is a light-driven water plastoquinone oxidoreductase, using light energy to abstract electrons from H(2)O, generating a proton gradient subsequently used for ATP formation.</text>
</comment>
<comment type="subunit">
    <text evidence="1">PSII is composed of 1 copy each of membrane proteins PsbA, PsbB, PsbC, PsbD, PsbE, PsbF, PsbH, PsbI, PsbJ, PsbK, PsbL, PsbM, PsbT, PsbX, PsbY, PsbZ, Psb30/Ycf12, peripheral proteins PsbO, CyanoQ (PsbQ), PsbU, PsbV and a large number of cofactors. It forms dimeric complexes.</text>
</comment>
<comment type="subcellular location">
    <subcellularLocation>
        <location evidence="1">Cellular thylakoid membrane</location>
        <topology evidence="1">Single-pass membrane protein</topology>
    </subcellularLocation>
</comment>
<comment type="similarity">
    <text evidence="1">Belongs to the PsbT family.</text>
</comment>
<organism>
    <name type="scientific">Synechococcus sp. (strain WH7803)</name>
    <dbReference type="NCBI Taxonomy" id="32051"/>
    <lineage>
        <taxon>Bacteria</taxon>
        <taxon>Bacillati</taxon>
        <taxon>Cyanobacteriota</taxon>
        <taxon>Cyanophyceae</taxon>
        <taxon>Synechococcales</taxon>
        <taxon>Synechococcaceae</taxon>
        <taxon>Synechococcus</taxon>
    </lineage>
</organism>
<sequence>MESFAYILILTLAIATLFFAIAFRDPPKIGK</sequence>
<reference key="1">
    <citation type="submission" date="2006-05" db="EMBL/GenBank/DDBJ databases">
        <authorList>
            <consortium name="Genoscope"/>
        </authorList>
    </citation>
    <scope>NUCLEOTIDE SEQUENCE [LARGE SCALE GENOMIC DNA]</scope>
    <source>
        <strain>WH7803</strain>
    </source>
</reference>
<proteinExistence type="inferred from homology"/>
<dbReference type="EMBL" id="CT971583">
    <property type="protein sequence ID" value="CAK22943.1"/>
    <property type="molecule type" value="Genomic_DNA"/>
</dbReference>
<dbReference type="SMR" id="A5GJ28"/>
<dbReference type="STRING" id="32051.SynWH7803_0517"/>
<dbReference type="KEGG" id="syx:SynWH7803_0517"/>
<dbReference type="eggNOG" id="ENOG50323KB">
    <property type="taxonomic scope" value="Bacteria"/>
</dbReference>
<dbReference type="HOGENOM" id="CLU_217078_1_0_3"/>
<dbReference type="Proteomes" id="UP000001566">
    <property type="component" value="Chromosome"/>
</dbReference>
<dbReference type="GO" id="GO:0009539">
    <property type="term" value="C:photosystem II reaction center"/>
    <property type="evidence" value="ECO:0007669"/>
    <property type="project" value="InterPro"/>
</dbReference>
<dbReference type="GO" id="GO:0031676">
    <property type="term" value="C:plasma membrane-derived thylakoid membrane"/>
    <property type="evidence" value="ECO:0007669"/>
    <property type="project" value="UniProtKB-SubCell"/>
</dbReference>
<dbReference type="GO" id="GO:0015979">
    <property type="term" value="P:photosynthesis"/>
    <property type="evidence" value="ECO:0007669"/>
    <property type="project" value="UniProtKB-UniRule"/>
</dbReference>
<dbReference type="HAMAP" id="MF_00808">
    <property type="entry name" value="PSII_PsbT"/>
    <property type="match status" value="1"/>
</dbReference>
<dbReference type="InterPro" id="IPR001743">
    <property type="entry name" value="PSII_PsbT"/>
</dbReference>
<dbReference type="InterPro" id="IPR037268">
    <property type="entry name" value="PSII_PsbT_sf"/>
</dbReference>
<dbReference type="NCBIfam" id="NF008825">
    <property type="entry name" value="PRK11875.1"/>
    <property type="match status" value="1"/>
</dbReference>
<dbReference type="Pfam" id="PF01405">
    <property type="entry name" value="PsbT"/>
    <property type="match status" value="1"/>
</dbReference>
<dbReference type="SUPFAM" id="SSF161029">
    <property type="entry name" value="Photosystem II reaction center protein T, PsbT"/>
    <property type="match status" value="1"/>
</dbReference>
<gene>
    <name evidence="1" type="primary">psbT</name>
    <name type="ordered locus">SynWH7803_0517</name>
</gene>
<feature type="chain" id="PRO_1000047102" description="Photosystem II reaction center protein T">
    <location>
        <begin position="1"/>
        <end position="31"/>
    </location>
</feature>
<feature type="transmembrane region" description="Helical" evidence="1">
    <location>
        <begin position="3"/>
        <end position="23"/>
    </location>
</feature>
<keyword id="KW-0472">Membrane</keyword>
<keyword id="KW-0602">Photosynthesis</keyword>
<keyword id="KW-0604">Photosystem II</keyword>
<keyword id="KW-1185">Reference proteome</keyword>
<keyword id="KW-0793">Thylakoid</keyword>
<keyword id="KW-0812">Transmembrane</keyword>
<keyword id="KW-1133">Transmembrane helix</keyword>